<protein>
    <recommendedName>
        <fullName evidence="1">tRNA dimethylallyltransferase</fullName>
        <ecNumber evidence="1">2.5.1.75</ecNumber>
    </recommendedName>
    <alternativeName>
        <fullName evidence="1">Dimethylallyl diphosphate:tRNA dimethylallyltransferase</fullName>
        <shortName evidence="1">DMAPP:tRNA dimethylallyltransferase</shortName>
        <shortName evidence="1">DMATase</shortName>
    </alternativeName>
    <alternativeName>
        <fullName evidence="1">Isopentenyl-diphosphate:tRNA isopentenyltransferase</fullName>
        <shortName evidence="1">IPP transferase</shortName>
        <shortName evidence="1">IPPT</shortName>
        <shortName evidence="1">IPTase</shortName>
    </alternativeName>
</protein>
<sequence>MTSRMPTVVPCLLGPTASGKTAAALALAARRPVEIISVDSALVYREMDIGTAKPTAEERAVAPHHLIDIVDPTDAYSAAQFRADTLRLTAEIHARGRLPLLVGGTMLYYKALTQGLNDLPAADAEVRATLDADAAREGWPALHARLAALDPVTAARLAPNDSQRIQRALEVFMLTGQTMSALLAAPVMQDDSAALWRFVPIALEPSERSVLHARIEKRFDAMLAGGFIDEVVKLRERGDLLPEMASMRCVGYRQVWEYLDGAVDYSTMRDKGVFATRQLCKRQLTWLRSMPERVVVDCCDPHATARVLEAIEALL</sequence>
<dbReference type="EC" id="2.5.1.75" evidence="1"/>
<dbReference type="EMBL" id="CP001052">
    <property type="protein sequence ID" value="ACD15173.1"/>
    <property type="status" value="ALT_INIT"/>
    <property type="molecule type" value="Genomic_DNA"/>
</dbReference>
<dbReference type="RefSeq" id="WP_041758742.1">
    <property type="nucleotide sequence ID" value="NC_010681.1"/>
</dbReference>
<dbReference type="SMR" id="B2T068"/>
<dbReference type="STRING" id="398527.Bphyt_0749"/>
<dbReference type="KEGG" id="bpy:Bphyt_0749"/>
<dbReference type="eggNOG" id="COG0324">
    <property type="taxonomic scope" value="Bacteria"/>
</dbReference>
<dbReference type="HOGENOM" id="CLU_032616_0_0_4"/>
<dbReference type="OrthoDB" id="9776390at2"/>
<dbReference type="Proteomes" id="UP000001739">
    <property type="component" value="Chromosome 1"/>
</dbReference>
<dbReference type="GO" id="GO:0005524">
    <property type="term" value="F:ATP binding"/>
    <property type="evidence" value="ECO:0007669"/>
    <property type="project" value="UniProtKB-UniRule"/>
</dbReference>
<dbReference type="GO" id="GO:0052381">
    <property type="term" value="F:tRNA dimethylallyltransferase activity"/>
    <property type="evidence" value="ECO:0007669"/>
    <property type="project" value="UniProtKB-UniRule"/>
</dbReference>
<dbReference type="GO" id="GO:0006400">
    <property type="term" value="P:tRNA modification"/>
    <property type="evidence" value="ECO:0007669"/>
    <property type="project" value="TreeGrafter"/>
</dbReference>
<dbReference type="FunFam" id="1.10.20.140:FF:000001">
    <property type="entry name" value="tRNA dimethylallyltransferase"/>
    <property type="match status" value="1"/>
</dbReference>
<dbReference type="Gene3D" id="1.10.20.140">
    <property type="match status" value="1"/>
</dbReference>
<dbReference type="Gene3D" id="3.40.50.300">
    <property type="entry name" value="P-loop containing nucleotide triphosphate hydrolases"/>
    <property type="match status" value="1"/>
</dbReference>
<dbReference type="HAMAP" id="MF_00185">
    <property type="entry name" value="IPP_trans"/>
    <property type="match status" value="1"/>
</dbReference>
<dbReference type="InterPro" id="IPR039657">
    <property type="entry name" value="Dimethylallyltransferase"/>
</dbReference>
<dbReference type="InterPro" id="IPR018022">
    <property type="entry name" value="IPT"/>
</dbReference>
<dbReference type="InterPro" id="IPR027417">
    <property type="entry name" value="P-loop_NTPase"/>
</dbReference>
<dbReference type="NCBIfam" id="TIGR00174">
    <property type="entry name" value="miaA"/>
    <property type="match status" value="1"/>
</dbReference>
<dbReference type="PANTHER" id="PTHR11088">
    <property type="entry name" value="TRNA DIMETHYLALLYLTRANSFERASE"/>
    <property type="match status" value="1"/>
</dbReference>
<dbReference type="PANTHER" id="PTHR11088:SF60">
    <property type="entry name" value="TRNA DIMETHYLALLYLTRANSFERASE"/>
    <property type="match status" value="1"/>
</dbReference>
<dbReference type="Pfam" id="PF01715">
    <property type="entry name" value="IPPT"/>
    <property type="match status" value="1"/>
</dbReference>
<dbReference type="SUPFAM" id="SSF52540">
    <property type="entry name" value="P-loop containing nucleoside triphosphate hydrolases"/>
    <property type="match status" value="1"/>
</dbReference>
<reference key="1">
    <citation type="journal article" date="2011" name="J. Bacteriol.">
        <title>Complete genome sequence of the plant growth-promoting endophyte Burkholderia phytofirmans strain PsJN.</title>
        <authorList>
            <person name="Weilharter A."/>
            <person name="Mitter B."/>
            <person name="Shin M.V."/>
            <person name="Chain P.S."/>
            <person name="Nowak J."/>
            <person name="Sessitsch A."/>
        </authorList>
    </citation>
    <scope>NUCLEOTIDE SEQUENCE [LARGE SCALE GENOMIC DNA]</scope>
    <source>
        <strain>DSM 17436 / LMG 22146 / PsJN</strain>
    </source>
</reference>
<feature type="chain" id="PRO_0000377097" description="tRNA dimethylallyltransferase">
    <location>
        <begin position="1"/>
        <end position="315"/>
    </location>
</feature>
<feature type="region of interest" description="Interaction with substrate tRNA" evidence="1">
    <location>
        <begin position="39"/>
        <end position="42"/>
    </location>
</feature>
<feature type="region of interest" description="Interaction with substrate tRNA" evidence="1">
    <location>
        <begin position="163"/>
        <end position="167"/>
    </location>
</feature>
<feature type="region of interest" description="Interaction with substrate tRNA" evidence="1">
    <location>
        <begin position="248"/>
        <end position="253"/>
    </location>
</feature>
<feature type="binding site" evidence="1">
    <location>
        <begin position="14"/>
        <end position="21"/>
    </location>
    <ligand>
        <name>ATP</name>
        <dbReference type="ChEBI" id="CHEBI:30616"/>
    </ligand>
</feature>
<feature type="binding site" evidence="1">
    <location>
        <begin position="16"/>
        <end position="21"/>
    </location>
    <ligand>
        <name>substrate</name>
    </ligand>
</feature>
<feature type="site" description="Interaction with substrate tRNA" evidence="1">
    <location>
        <position position="105"/>
    </location>
</feature>
<feature type="site" description="Interaction with substrate tRNA" evidence="1">
    <location>
        <position position="127"/>
    </location>
</feature>
<comment type="function">
    <text evidence="1">Catalyzes the transfer of a dimethylallyl group onto the adenine at position 37 in tRNAs that read codons beginning with uridine, leading to the formation of N6-(dimethylallyl)adenosine (i(6)A).</text>
</comment>
<comment type="catalytic activity">
    <reaction evidence="1">
        <text>adenosine(37) in tRNA + dimethylallyl diphosphate = N(6)-dimethylallyladenosine(37) in tRNA + diphosphate</text>
        <dbReference type="Rhea" id="RHEA:26482"/>
        <dbReference type="Rhea" id="RHEA-COMP:10162"/>
        <dbReference type="Rhea" id="RHEA-COMP:10375"/>
        <dbReference type="ChEBI" id="CHEBI:33019"/>
        <dbReference type="ChEBI" id="CHEBI:57623"/>
        <dbReference type="ChEBI" id="CHEBI:74411"/>
        <dbReference type="ChEBI" id="CHEBI:74415"/>
        <dbReference type="EC" id="2.5.1.75"/>
    </reaction>
</comment>
<comment type="cofactor">
    <cofactor evidence="1">
        <name>Mg(2+)</name>
        <dbReference type="ChEBI" id="CHEBI:18420"/>
    </cofactor>
</comment>
<comment type="subunit">
    <text evidence="1">Monomer.</text>
</comment>
<comment type="similarity">
    <text evidence="1">Belongs to the IPP transferase family.</text>
</comment>
<comment type="sequence caution" evidence="2">
    <conflict type="erroneous initiation">
        <sequence resource="EMBL-CDS" id="ACD15173"/>
    </conflict>
</comment>
<name>MIAA_PARPJ</name>
<keyword id="KW-0067">ATP-binding</keyword>
<keyword id="KW-0460">Magnesium</keyword>
<keyword id="KW-0547">Nucleotide-binding</keyword>
<keyword id="KW-0808">Transferase</keyword>
<keyword id="KW-0819">tRNA processing</keyword>
<proteinExistence type="inferred from homology"/>
<accession>B2T068</accession>
<organism>
    <name type="scientific">Paraburkholderia phytofirmans (strain DSM 17436 / LMG 22146 / PsJN)</name>
    <name type="common">Burkholderia phytofirmans</name>
    <dbReference type="NCBI Taxonomy" id="398527"/>
    <lineage>
        <taxon>Bacteria</taxon>
        <taxon>Pseudomonadati</taxon>
        <taxon>Pseudomonadota</taxon>
        <taxon>Betaproteobacteria</taxon>
        <taxon>Burkholderiales</taxon>
        <taxon>Burkholderiaceae</taxon>
        <taxon>Paraburkholderia</taxon>
    </lineage>
</organism>
<evidence type="ECO:0000255" key="1">
    <source>
        <dbReference type="HAMAP-Rule" id="MF_00185"/>
    </source>
</evidence>
<evidence type="ECO:0000305" key="2"/>
<gene>
    <name evidence="1" type="primary">miaA</name>
    <name type="ordered locus">Bphyt_0749</name>
</gene>